<dbReference type="EC" id="2.1.1.-" evidence="1"/>
<dbReference type="EMBL" id="CP000560">
    <property type="protein sequence ID" value="ABS76135.1"/>
    <property type="molecule type" value="Genomic_DNA"/>
</dbReference>
<dbReference type="RefSeq" id="WP_012118945.1">
    <property type="nucleotide sequence ID" value="NC_009725.2"/>
</dbReference>
<dbReference type="SMR" id="A7ZAV9"/>
<dbReference type="GeneID" id="93082944"/>
<dbReference type="KEGG" id="bay:RBAM_038100"/>
<dbReference type="HOGENOM" id="CLU_065341_0_2_9"/>
<dbReference type="Proteomes" id="UP000001120">
    <property type="component" value="Chromosome"/>
</dbReference>
<dbReference type="GO" id="GO:0005829">
    <property type="term" value="C:cytosol"/>
    <property type="evidence" value="ECO:0007669"/>
    <property type="project" value="TreeGrafter"/>
</dbReference>
<dbReference type="GO" id="GO:0070043">
    <property type="term" value="F:rRNA (guanine-N7-)-methyltransferase activity"/>
    <property type="evidence" value="ECO:0007669"/>
    <property type="project" value="UniProtKB-UniRule"/>
</dbReference>
<dbReference type="FunFam" id="3.40.50.150:FF:000041">
    <property type="entry name" value="Ribosomal RNA small subunit methyltransferase G"/>
    <property type="match status" value="1"/>
</dbReference>
<dbReference type="Gene3D" id="3.40.50.150">
    <property type="entry name" value="Vaccinia Virus protein VP39"/>
    <property type="match status" value="1"/>
</dbReference>
<dbReference type="HAMAP" id="MF_00074">
    <property type="entry name" value="16SrRNA_methyltr_G"/>
    <property type="match status" value="1"/>
</dbReference>
<dbReference type="InterPro" id="IPR003682">
    <property type="entry name" value="rRNA_ssu_MeTfrase_G"/>
</dbReference>
<dbReference type="InterPro" id="IPR029063">
    <property type="entry name" value="SAM-dependent_MTases_sf"/>
</dbReference>
<dbReference type="NCBIfam" id="TIGR00138">
    <property type="entry name" value="rsmG_gidB"/>
    <property type="match status" value="1"/>
</dbReference>
<dbReference type="PANTHER" id="PTHR31760">
    <property type="entry name" value="S-ADENOSYL-L-METHIONINE-DEPENDENT METHYLTRANSFERASES SUPERFAMILY PROTEIN"/>
    <property type="match status" value="1"/>
</dbReference>
<dbReference type="PANTHER" id="PTHR31760:SF0">
    <property type="entry name" value="S-ADENOSYL-L-METHIONINE-DEPENDENT METHYLTRANSFERASES SUPERFAMILY PROTEIN"/>
    <property type="match status" value="1"/>
</dbReference>
<dbReference type="Pfam" id="PF02527">
    <property type="entry name" value="GidB"/>
    <property type="match status" value="1"/>
</dbReference>
<dbReference type="PIRSF" id="PIRSF003078">
    <property type="entry name" value="GidB"/>
    <property type="match status" value="1"/>
</dbReference>
<dbReference type="SUPFAM" id="SSF53335">
    <property type="entry name" value="S-adenosyl-L-methionine-dependent methyltransferases"/>
    <property type="match status" value="1"/>
</dbReference>
<organism>
    <name type="scientific">Bacillus velezensis (strain DSM 23117 / BGSC 10A6 / LMG 26770 / FZB42)</name>
    <name type="common">Bacillus amyloliquefaciens subsp. plantarum</name>
    <dbReference type="NCBI Taxonomy" id="326423"/>
    <lineage>
        <taxon>Bacteria</taxon>
        <taxon>Bacillati</taxon>
        <taxon>Bacillota</taxon>
        <taxon>Bacilli</taxon>
        <taxon>Bacillales</taxon>
        <taxon>Bacillaceae</taxon>
        <taxon>Bacillus</taxon>
        <taxon>Bacillus amyloliquefaciens group</taxon>
    </lineage>
</organism>
<reference key="1">
    <citation type="journal article" date="2007" name="Nat. Biotechnol.">
        <title>Comparative analysis of the complete genome sequence of the plant growth-promoting bacterium Bacillus amyloliquefaciens FZB42.</title>
        <authorList>
            <person name="Chen X.H."/>
            <person name="Koumoutsi A."/>
            <person name="Scholz R."/>
            <person name="Eisenreich A."/>
            <person name="Schneider K."/>
            <person name="Heinemeyer I."/>
            <person name="Morgenstern B."/>
            <person name="Voss B."/>
            <person name="Hess W.R."/>
            <person name="Reva O."/>
            <person name="Junge H."/>
            <person name="Voigt B."/>
            <person name="Jungblut P.R."/>
            <person name="Vater J."/>
            <person name="Suessmuth R."/>
            <person name="Liesegang H."/>
            <person name="Strittmatter A."/>
            <person name="Gottschalk G."/>
            <person name="Borriss R."/>
        </authorList>
    </citation>
    <scope>NUCLEOTIDE SEQUENCE [LARGE SCALE GENOMIC DNA]</scope>
    <source>
        <strain>DSM 23117 / BGSC 10A6 / LMG 26770 / FZB42</strain>
    </source>
</reference>
<proteinExistence type="inferred from homology"/>
<keyword id="KW-0963">Cytoplasm</keyword>
<keyword id="KW-0489">Methyltransferase</keyword>
<keyword id="KW-0698">rRNA processing</keyword>
<keyword id="KW-0949">S-adenosyl-L-methionine</keyword>
<keyword id="KW-0808">Transferase</keyword>
<feature type="chain" id="PRO_1000010119" description="Ribosomal RNA small subunit methyltransferase G">
    <location>
        <begin position="1"/>
        <end position="239"/>
    </location>
</feature>
<feature type="region of interest" description="Disordered" evidence="2">
    <location>
        <begin position="215"/>
        <end position="239"/>
    </location>
</feature>
<feature type="compositionally biased region" description="Basic residues" evidence="2">
    <location>
        <begin position="216"/>
        <end position="227"/>
    </location>
</feature>
<feature type="binding site" evidence="1">
    <location>
        <position position="77"/>
    </location>
    <ligand>
        <name>S-adenosyl-L-methionine</name>
        <dbReference type="ChEBI" id="CHEBI:59789"/>
    </ligand>
</feature>
<feature type="binding site" evidence="1">
    <location>
        <position position="82"/>
    </location>
    <ligand>
        <name>S-adenosyl-L-methionine</name>
        <dbReference type="ChEBI" id="CHEBI:59789"/>
    </ligand>
</feature>
<feature type="binding site" evidence="1">
    <location>
        <begin position="128"/>
        <end position="129"/>
    </location>
    <ligand>
        <name>S-adenosyl-L-methionine</name>
        <dbReference type="ChEBI" id="CHEBI:59789"/>
    </ligand>
</feature>
<feature type="binding site" evidence="1">
    <location>
        <position position="147"/>
    </location>
    <ligand>
        <name>S-adenosyl-L-methionine</name>
        <dbReference type="ChEBI" id="CHEBI:59789"/>
    </ligand>
</feature>
<evidence type="ECO:0000255" key="1">
    <source>
        <dbReference type="HAMAP-Rule" id="MF_00074"/>
    </source>
</evidence>
<evidence type="ECO:0000256" key="2">
    <source>
        <dbReference type="SAM" id="MobiDB-lite"/>
    </source>
</evidence>
<accession>A7ZAV9</accession>
<protein>
    <recommendedName>
        <fullName evidence="1">Ribosomal RNA small subunit methyltransferase G</fullName>
        <ecNumber evidence="1">2.1.1.-</ecNumber>
    </recommendedName>
    <alternativeName>
        <fullName evidence="1">16S rRNA 7-methylguanosine methyltransferase</fullName>
        <shortName evidence="1">16S rRNA m7G methyltransferase</shortName>
    </alternativeName>
</protein>
<gene>
    <name evidence="1" type="primary">rsmG</name>
    <name type="ordered locus">RBAM_038100</name>
</gene>
<sequence length="239" mass="26910">MNIEEFISSLAEKGISLSDRQLEQFELYYRMLVEWNEKMNLTSITEKKDVYLKHFYDSITAAFYIDFEKVTTLCDVGAGAGFPSLPIKICFPHLHVTIVDSLNKRITFLETLSDALQLEHTSFVHDRAETFGQRKDVRESFDLVTARAVARLSVLSELCLPLAKKNGVFAALKAAAADEELKAGQKAIKVLGGELEQVHSFTLPVEESERNIMIIRKTKSTPKKYPRKPGTPNKSPIEG</sequence>
<name>RSMG_BACVZ</name>
<comment type="function">
    <text evidence="1">Specifically methylates the N7 position of guanine in position 535 of 16S rRNA.</text>
</comment>
<comment type="subcellular location">
    <subcellularLocation>
        <location evidence="1">Cytoplasm</location>
    </subcellularLocation>
</comment>
<comment type="similarity">
    <text evidence="1">Belongs to the methyltransferase superfamily. RNA methyltransferase RsmG family.</text>
</comment>